<proteinExistence type="evidence at protein level"/>
<dbReference type="EC" id="1.14.14.35" evidence="1"/>
<dbReference type="EMBL" id="CP000094">
    <property type="protein sequence ID" value="ABA74620.1"/>
    <property type="molecule type" value="Genomic_DNA"/>
</dbReference>
<dbReference type="RefSeq" id="WP_011334289.1">
    <property type="nucleotide sequence ID" value="NC_007492.2"/>
</dbReference>
<dbReference type="PDB" id="8T0U">
    <property type="method" value="X-ray"/>
    <property type="resolution" value="2.60 A"/>
    <property type="chains" value="A/B/C/D/E/F/G/H=1-364"/>
</dbReference>
<dbReference type="PDB" id="8T0W">
    <property type="method" value="X-ray"/>
    <property type="resolution" value="1.75 A"/>
    <property type="chains" value="A/B/C/D/E/F/G/H=1-364"/>
</dbReference>
<dbReference type="PDBsum" id="8T0U"/>
<dbReference type="PDBsum" id="8T0W"/>
<dbReference type="SMR" id="Q3KC85"/>
<dbReference type="KEGG" id="pfo:Pfl01_2879"/>
<dbReference type="eggNOG" id="COG2141">
    <property type="taxonomic scope" value="Bacteria"/>
</dbReference>
<dbReference type="HOGENOM" id="CLU_027853_1_2_6"/>
<dbReference type="BioCyc" id="MetaCyc:MONOMER-20055"/>
<dbReference type="BRENDA" id="1.14.14.35">
    <property type="organism ID" value="5121"/>
</dbReference>
<dbReference type="Proteomes" id="UP000002704">
    <property type="component" value="Chromosome"/>
</dbReference>
<dbReference type="GO" id="GO:0008726">
    <property type="term" value="F:alkanesulfonate monooxygenase activity"/>
    <property type="evidence" value="ECO:0007669"/>
    <property type="project" value="TreeGrafter"/>
</dbReference>
<dbReference type="GO" id="GO:0046306">
    <property type="term" value="P:alkanesulfonate catabolic process"/>
    <property type="evidence" value="ECO:0007669"/>
    <property type="project" value="TreeGrafter"/>
</dbReference>
<dbReference type="CDD" id="cd01094">
    <property type="entry name" value="Alkanesulfonate_monoxygenase"/>
    <property type="match status" value="1"/>
</dbReference>
<dbReference type="Gene3D" id="3.20.20.30">
    <property type="entry name" value="Luciferase-like domain"/>
    <property type="match status" value="1"/>
</dbReference>
<dbReference type="InterPro" id="IPR024014">
    <property type="entry name" value="DMSO2_SphG"/>
</dbReference>
<dbReference type="InterPro" id="IPR011251">
    <property type="entry name" value="Luciferase-like_dom"/>
</dbReference>
<dbReference type="InterPro" id="IPR036661">
    <property type="entry name" value="Luciferase-like_sf"/>
</dbReference>
<dbReference type="InterPro" id="IPR050172">
    <property type="entry name" value="SsuD_RutA_monooxygenase"/>
</dbReference>
<dbReference type="NCBIfam" id="TIGR04021">
    <property type="entry name" value="LLM_DMSO2_sfnG"/>
    <property type="match status" value="1"/>
</dbReference>
<dbReference type="PANTHER" id="PTHR42847">
    <property type="entry name" value="ALKANESULFONATE MONOOXYGENASE"/>
    <property type="match status" value="1"/>
</dbReference>
<dbReference type="PANTHER" id="PTHR42847:SF4">
    <property type="entry name" value="ALKANESULFONATE MONOOXYGENASE-RELATED"/>
    <property type="match status" value="1"/>
</dbReference>
<dbReference type="Pfam" id="PF00296">
    <property type="entry name" value="Bac_luciferase"/>
    <property type="match status" value="1"/>
</dbReference>
<dbReference type="SUPFAM" id="SSF51679">
    <property type="entry name" value="Bacterial luciferase-like"/>
    <property type="match status" value="1"/>
</dbReference>
<reference key="1">
    <citation type="journal article" date="2009" name="Genome Biol.">
        <title>Genomic and genetic analyses of diversity and plant interactions of Pseudomonas fluorescens.</title>
        <authorList>
            <person name="Silby M.W."/>
            <person name="Cerdeno-Tarraga A.M."/>
            <person name="Vernikos G.S."/>
            <person name="Giddens S.R."/>
            <person name="Jackson R.W."/>
            <person name="Preston G.M."/>
            <person name="Zhang X.-X."/>
            <person name="Moon C.D."/>
            <person name="Gehrig S.M."/>
            <person name="Godfrey S.A.C."/>
            <person name="Knight C.G."/>
            <person name="Malone J.G."/>
            <person name="Robinson Z."/>
            <person name="Spiers A.J."/>
            <person name="Harris S."/>
            <person name="Challis G.L."/>
            <person name="Yaxley A.M."/>
            <person name="Harris D."/>
            <person name="Seeger K."/>
            <person name="Murphy L."/>
            <person name="Rutter S."/>
            <person name="Squares R."/>
            <person name="Quail M.A."/>
            <person name="Saunders E."/>
            <person name="Mavromatis K."/>
            <person name="Brettin T.S."/>
            <person name="Bentley S.D."/>
            <person name="Hothersall J."/>
            <person name="Stephens E."/>
            <person name="Thomas C.M."/>
            <person name="Parkhill J."/>
            <person name="Levy S.B."/>
            <person name="Rainey P.B."/>
            <person name="Thomson N.R."/>
        </authorList>
    </citation>
    <scope>NUCLEOTIDE SEQUENCE [LARGE SCALE GENOMIC DNA]</scope>
    <source>
        <strain evidence="4 5">Pf0-1</strain>
    </source>
</reference>
<reference key="2">
    <citation type="journal article" date="2016" name="Arch. Biochem. Biophys.">
        <title>The reduced flavin-dependent monooxygenase SfnG converts dimethylsulfone to methanesulfinate.</title>
        <authorList>
            <person name="Wicht D.K."/>
        </authorList>
    </citation>
    <scope>FUNCTION</scope>
    <scope>CATALYTIC ACTIVITY</scope>
</reference>
<protein>
    <recommendedName>
        <fullName evidence="2">FMNH(2)-dependent dimethylsulfone monooxygenase</fullName>
        <ecNumber evidence="1">1.14.14.35</ecNumber>
    </recommendedName>
</protein>
<comment type="function">
    <text evidence="1">Involved in the dimethyl sulfide degradation pathway. Catalyzes the oxidation of dimethylsulfone (DMSO2) to yield methanesulfinate, which is oxidized spontaneously to methanesulfonate in the presence of dioxygen and FMNH(2).</text>
</comment>
<comment type="catalytic activity">
    <reaction evidence="1">
        <text>dimethyl sulfone + FMNH2 + O2 = methanesulfinate + FMN + formaldehyde + H2O + 2 H(+)</text>
        <dbReference type="Rhea" id="RHEA:50716"/>
        <dbReference type="ChEBI" id="CHEBI:9349"/>
        <dbReference type="ChEBI" id="CHEBI:15377"/>
        <dbReference type="ChEBI" id="CHEBI:15378"/>
        <dbReference type="ChEBI" id="CHEBI:15379"/>
        <dbReference type="ChEBI" id="CHEBI:16842"/>
        <dbReference type="ChEBI" id="CHEBI:57618"/>
        <dbReference type="ChEBI" id="CHEBI:58210"/>
        <dbReference type="ChEBI" id="CHEBI:133603"/>
        <dbReference type="EC" id="1.14.14.35"/>
    </reaction>
</comment>
<comment type="similarity">
    <text evidence="3">Belongs to the SsuD family.</text>
</comment>
<gene>
    <name evidence="2" type="primary">sfnG</name>
    <name evidence="4" type="ordered locus">Pfl01_2879</name>
</gene>
<evidence type="ECO:0000269" key="1">
    <source>
    </source>
</evidence>
<evidence type="ECO:0000303" key="2">
    <source>
    </source>
</evidence>
<evidence type="ECO:0000305" key="3"/>
<evidence type="ECO:0000312" key="4">
    <source>
        <dbReference type="EMBL" id="ABA74620.1"/>
    </source>
</evidence>
<evidence type="ECO:0000312" key="5">
    <source>
        <dbReference type="Proteomes" id="UP000002704"/>
    </source>
</evidence>
<evidence type="ECO:0007829" key="6">
    <source>
        <dbReference type="PDB" id="8T0U"/>
    </source>
</evidence>
<evidence type="ECO:0007829" key="7">
    <source>
        <dbReference type="PDB" id="8T0W"/>
    </source>
</evidence>
<organism>
    <name type="scientific">Pseudomonas fluorescens (strain Pf0-1)</name>
    <dbReference type="NCBI Taxonomy" id="205922"/>
    <lineage>
        <taxon>Bacteria</taxon>
        <taxon>Pseudomonadati</taxon>
        <taxon>Pseudomonadota</taxon>
        <taxon>Gammaproteobacteria</taxon>
        <taxon>Pseudomonadales</taxon>
        <taxon>Pseudomonadaceae</taxon>
        <taxon>Pseudomonas</taxon>
    </lineage>
</organism>
<feature type="chain" id="PRO_0000443537" description="FMNH(2)-dependent dimethylsulfone monooxygenase">
    <location>
        <begin position="1"/>
        <end position="364"/>
    </location>
</feature>
<feature type="strand" evidence="7">
    <location>
        <begin position="7"/>
        <end position="12"/>
    </location>
</feature>
<feature type="turn" evidence="7">
    <location>
        <begin position="16"/>
        <end position="19"/>
    </location>
</feature>
<feature type="strand" evidence="7">
    <location>
        <begin position="20"/>
        <end position="22"/>
    </location>
</feature>
<feature type="helix" evidence="7">
    <location>
        <begin position="32"/>
        <end position="45"/>
    </location>
</feature>
<feature type="strand" evidence="7">
    <location>
        <begin position="49"/>
        <end position="52"/>
    </location>
</feature>
<feature type="strand" evidence="6">
    <location>
        <begin position="57"/>
        <end position="59"/>
    </location>
</feature>
<feature type="helix" evidence="7">
    <location>
        <begin position="68"/>
        <end position="77"/>
    </location>
</feature>
<feature type="strand" evidence="7">
    <location>
        <begin position="83"/>
        <end position="88"/>
    </location>
</feature>
<feature type="helix" evidence="7">
    <location>
        <begin position="95"/>
        <end position="108"/>
    </location>
</feature>
<feature type="strand" evidence="7">
    <location>
        <begin position="113"/>
        <end position="118"/>
    </location>
</feature>
<feature type="helix" evidence="7">
    <location>
        <begin position="123"/>
        <end position="128"/>
    </location>
</feature>
<feature type="helix" evidence="7">
    <location>
        <begin position="136"/>
        <end position="155"/>
    </location>
</feature>
<feature type="strand" evidence="7">
    <location>
        <begin position="157"/>
        <end position="162"/>
    </location>
</feature>
<feature type="strand" evidence="7">
    <location>
        <begin position="167"/>
        <end position="171"/>
    </location>
</feature>
<feature type="strand" evidence="7">
    <location>
        <begin position="183"/>
        <end position="186"/>
    </location>
</feature>
<feature type="helix" evidence="7">
    <location>
        <begin position="190"/>
        <end position="196"/>
    </location>
</feature>
<feature type="strand" evidence="7">
    <location>
        <begin position="201"/>
        <end position="205"/>
    </location>
</feature>
<feature type="helix" evidence="7">
    <location>
        <begin position="210"/>
        <end position="227"/>
    </location>
</feature>
<feature type="strand" evidence="7">
    <location>
        <begin position="232"/>
        <end position="238"/>
    </location>
</feature>
<feature type="helix" evidence="7">
    <location>
        <begin position="245"/>
        <end position="257"/>
    </location>
</feature>
<feature type="helix" evidence="7">
    <location>
        <begin position="261"/>
        <end position="270"/>
    </location>
</feature>
<feature type="helix" evidence="7">
    <location>
        <begin position="271"/>
        <end position="273"/>
    </location>
</feature>
<feature type="helix" evidence="7">
    <location>
        <begin position="275"/>
        <end position="277"/>
    </location>
</feature>
<feature type="turn" evidence="7">
    <location>
        <begin position="284"/>
        <end position="287"/>
    </location>
</feature>
<feature type="helix" evidence="7">
    <location>
        <begin position="290"/>
        <end position="293"/>
    </location>
</feature>
<feature type="helix" evidence="7">
    <location>
        <begin position="299"/>
        <end position="302"/>
    </location>
</feature>
<feature type="helix" evidence="7">
    <location>
        <begin position="308"/>
        <end position="319"/>
    </location>
</feature>
<feature type="turn" evidence="7">
    <location>
        <begin position="320"/>
        <end position="322"/>
    </location>
</feature>
<feature type="strand" evidence="7">
    <location>
        <begin position="325"/>
        <end position="329"/>
    </location>
</feature>
<feature type="helix" evidence="7">
    <location>
        <begin position="333"/>
        <end position="343"/>
    </location>
</feature>
<feature type="helix" evidence="7">
    <location>
        <begin position="345"/>
        <end position="356"/>
    </location>
</feature>
<accession>Q3KC85</accession>
<keyword id="KW-0002">3D-structure</keyword>
<keyword id="KW-0285">Flavoprotein</keyword>
<keyword id="KW-0288">FMN</keyword>
<keyword id="KW-0503">Monooxygenase</keyword>
<keyword id="KW-0560">Oxidoreductase</keyword>
<name>SFNG_PSEPF</name>
<sequence length="364" mass="40339">MSQQAVKFAYWVPNVSGGLVVSRIEQRTDWGIDYNRKLAQLAEAAGFEYALTQIRFTAGYGAEFQHESVAFSHALLAATSQLKVIAAILPGPWQPALAAKQLATIDQLTNGRIAVNIVSGWFRGEFQAIGEHWLEHDERYRRSEEFIRSLRGIWSQDNFTFRGDFYRFDNYSLKPKPLGRPEIFQGGSSRAARDMAARVSDWYFTNGNSVEGIKAQVDDIRAKAAANHHSVKIGVNAFVIARDTEEEAKAVLAQIIDQADPEAVNAFGDAAKQAGRASPEGEGNWAKSTFEDLVQYNDGFKTNLIGTPQQIAERIVALKAVGVDLVLAGFLHFQEEVEYFGQRVLPLVRELEAKAQSARTAEVA</sequence>